<name>PPAX_CLOPE</name>
<accession>Q8XIY6</accession>
<evidence type="ECO:0000255" key="1">
    <source>
        <dbReference type="HAMAP-Rule" id="MF_01250"/>
    </source>
</evidence>
<sequence>MIKAVLFDLDGTLINTNDLILKSFKHTFKTMLDLEPSEEEITMNYGRPLQEIFKSYDENRIEEMINCYRKINLELHDDECKEFADVDLMLKTLKSKGIKIGVVTSKKSDMAERGAKLMGIFKYFDTFITPEITTKHKPDGEPVLKACENLGVSPSEALMVGDSPYDILAGKNAGAKTCGVKYTALPLEKLGESNPDFYVDKPLEILDLVEKLNS</sequence>
<feature type="chain" id="PRO_0000056840" description="Putative pyrophosphatase PpaX">
    <location>
        <begin position="1"/>
        <end position="214"/>
    </location>
</feature>
<feature type="active site" description="Nucleophile" evidence="1">
    <location>
        <position position="8"/>
    </location>
</feature>
<protein>
    <recommendedName>
        <fullName evidence="1">Putative pyrophosphatase PpaX</fullName>
        <ecNumber evidence="1">3.6.1.1</ecNumber>
    </recommendedName>
</protein>
<comment type="catalytic activity">
    <reaction evidence="1">
        <text>diphosphate + H2O = 2 phosphate + H(+)</text>
        <dbReference type="Rhea" id="RHEA:24576"/>
        <dbReference type="ChEBI" id="CHEBI:15377"/>
        <dbReference type="ChEBI" id="CHEBI:15378"/>
        <dbReference type="ChEBI" id="CHEBI:33019"/>
        <dbReference type="ChEBI" id="CHEBI:43474"/>
        <dbReference type="EC" id="3.6.1.1"/>
    </reaction>
</comment>
<comment type="cofactor">
    <cofactor evidence="1">
        <name>Mg(2+)</name>
        <dbReference type="ChEBI" id="CHEBI:18420"/>
    </cofactor>
</comment>
<comment type="similarity">
    <text evidence="1">Belongs to the HAD-like hydrolase superfamily. PpaX family.</text>
</comment>
<reference key="1">
    <citation type="journal article" date="2002" name="Proc. Natl. Acad. Sci. U.S.A.">
        <title>Complete genome sequence of Clostridium perfringens, an anaerobic flesh-eater.</title>
        <authorList>
            <person name="Shimizu T."/>
            <person name="Ohtani K."/>
            <person name="Hirakawa H."/>
            <person name="Ohshima K."/>
            <person name="Yamashita A."/>
            <person name="Shiba T."/>
            <person name="Ogasawara N."/>
            <person name="Hattori M."/>
            <person name="Kuhara S."/>
            <person name="Hayashi H."/>
        </authorList>
    </citation>
    <scope>NUCLEOTIDE SEQUENCE [LARGE SCALE GENOMIC DNA]</scope>
    <source>
        <strain>13 / Type A</strain>
    </source>
</reference>
<keyword id="KW-0378">Hydrolase</keyword>
<keyword id="KW-0460">Magnesium</keyword>
<keyword id="KW-1185">Reference proteome</keyword>
<organism>
    <name type="scientific">Clostridium perfringens (strain 13 / Type A)</name>
    <dbReference type="NCBI Taxonomy" id="195102"/>
    <lineage>
        <taxon>Bacteria</taxon>
        <taxon>Bacillati</taxon>
        <taxon>Bacillota</taxon>
        <taxon>Clostridia</taxon>
        <taxon>Eubacteriales</taxon>
        <taxon>Clostridiaceae</taxon>
        <taxon>Clostridium</taxon>
    </lineage>
</organism>
<dbReference type="EC" id="3.6.1.1" evidence="1"/>
<dbReference type="EMBL" id="BA000016">
    <property type="protein sequence ID" value="BAB81683.1"/>
    <property type="molecule type" value="Genomic_DNA"/>
</dbReference>
<dbReference type="RefSeq" id="WP_011010709.1">
    <property type="nucleotide sequence ID" value="NC_003366.1"/>
</dbReference>
<dbReference type="SMR" id="Q8XIY6"/>
<dbReference type="STRING" id="195102.gene:10491246"/>
<dbReference type="KEGG" id="cpe:CPE1977"/>
<dbReference type="HOGENOM" id="CLU_045011_19_3_9"/>
<dbReference type="Proteomes" id="UP000000818">
    <property type="component" value="Chromosome"/>
</dbReference>
<dbReference type="GO" id="GO:0005829">
    <property type="term" value="C:cytosol"/>
    <property type="evidence" value="ECO:0007669"/>
    <property type="project" value="TreeGrafter"/>
</dbReference>
<dbReference type="GO" id="GO:0004427">
    <property type="term" value="F:inorganic diphosphate phosphatase activity"/>
    <property type="evidence" value="ECO:0007669"/>
    <property type="project" value="UniProtKB-UniRule"/>
</dbReference>
<dbReference type="GO" id="GO:0000287">
    <property type="term" value="F:magnesium ion binding"/>
    <property type="evidence" value="ECO:0007669"/>
    <property type="project" value="UniProtKB-UniRule"/>
</dbReference>
<dbReference type="GO" id="GO:0008967">
    <property type="term" value="F:phosphoglycolate phosphatase activity"/>
    <property type="evidence" value="ECO:0007669"/>
    <property type="project" value="TreeGrafter"/>
</dbReference>
<dbReference type="GO" id="GO:0006281">
    <property type="term" value="P:DNA repair"/>
    <property type="evidence" value="ECO:0007669"/>
    <property type="project" value="TreeGrafter"/>
</dbReference>
<dbReference type="CDD" id="cd02616">
    <property type="entry name" value="HAD_PPase"/>
    <property type="match status" value="1"/>
</dbReference>
<dbReference type="FunFam" id="3.40.50.1000:FF:000022">
    <property type="entry name" value="Phosphoglycolate phosphatase"/>
    <property type="match status" value="1"/>
</dbReference>
<dbReference type="Gene3D" id="3.40.50.1000">
    <property type="entry name" value="HAD superfamily/HAD-like"/>
    <property type="match status" value="1"/>
</dbReference>
<dbReference type="Gene3D" id="1.10.150.240">
    <property type="entry name" value="Putative phosphatase, domain 2"/>
    <property type="match status" value="1"/>
</dbReference>
<dbReference type="HAMAP" id="MF_01250">
    <property type="entry name" value="Pyrophosphat_PpaX"/>
    <property type="match status" value="1"/>
</dbReference>
<dbReference type="InterPro" id="IPR050155">
    <property type="entry name" value="HAD-like_hydrolase_sf"/>
</dbReference>
<dbReference type="InterPro" id="IPR036412">
    <property type="entry name" value="HAD-like_sf"/>
</dbReference>
<dbReference type="InterPro" id="IPR006439">
    <property type="entry name" value="HAD-SF_hydro_IA"/>
</dbReference>
<dbReference type="InterPro" id="IPR041492">
    <property type="entry name" value="HAD_2"/>
</dbReference>
<dbReference type="InterPro" id="IPR023214">
    <property type="entry name" value="HAD_sf"/>
</dbReference>
<dbReference type="InterPro" id="IPR023198">
    <property type="entry name" value="PGP-like_dom2"/>
</dbReference>
<dbReference type="InterPro" id="IPR023733">
    <property type="entry name" value="Pyrophosphatase_Ppax"/>
</dbReference>
<dbReference type="NCBIfam" id="TIGR01549">
    <property type="entry name" value="HAD-SF-IA-v1"/>
    <property type="match status" value="1"/>
</dbReference>
<dbReference type="NCBIfam" id="TIGR01509">
    <property type="entry name" value="HAD-SF-IA-v3"/>
    <property type="match status" value="1"/>
</dbReference>
<dbReference type="NCBIfam" id="NF009804">
    <property type="entry name" value="PRK13288.1"/>
    <property type="match status" value="1"/>
</dbReference>
<dbReference type="PANTHER" id="PTHR43434">
    <property type="entry name" value="PHOSPHOGLYCOLATE PHOSPHATASE"/>
    <property type="match status" value="1"/>
</dbReference>
<dbReference type="PANTHER" id="PTHR43434:SF26">
    <property type="entry name" value="PYROPHOSPHATASE PPAX"/>
    <property type="match status" value="1"/>
</dbReference>
<dbReference type="Pfam" id="PF13419">
    <property type="entry name" value="HAD_2"/>
    <property type="match status" value="1"/>
</dbReference>
<dbReference type="PRINTS" id="PR00413">
    <property type="entry name" value="HADHALOGNASE"/>
</dbReference>
<dbReference type="SFLD" id="SFLDG01135">
    <property type="entry name" value="C1.5.6:_HAD__Beta-PGM__Phospha"/>
    <property type="match status" value="1"/>
</dbReference>
<dbReference type="SFLD" id="SFLDS00003">
    <property type="entry name" value="Haloacid_Dehalogenase"/>
    <property type="match status" value="1"/>
</dbReference>
<dbReference type="SUPFAM" id="SSF56784">
    <property type="entry name" value="HAD-like"/>
    <property type="match status" value="1"/>
</dbReference>
<proteinExistence type="inferred from homology"/>
<gene>
    <name evidence="1" type="primary">ppaX</name>
    <name type="ordered locus">CPE1977</name>
</gene>